<reference key="1">
    <citation type="journal article" date="2009" name="J. Bacteriol.">
        <title>The complete genome sequence of Helicobacter pylori strain G27.</title>
        <authorList>
            <person name="Baltrus D.A."/>
            <person name="Amieva M.R."/>
            <person name="Covacci A."/>
            <person name="Lowe T.M."/>
            <person name="Merrell D.S."/>
            <person name="Ottemann K.M."/>
            <person name="Stein M."/>
            <person name="Salama N.R."/>
            <person name="Guillemin K."/>
        </authorList>
    </citation>
    <scope>NUCLEOTIDE SEQUENCE [LARGE SCALE GENOMIC DNA]</scope>
    <source>
        <strain>G27</strain>
    </source>
</reference>
<feature type="chain" id="PRO_1000097073" description="Pantothenate synthetase">
    <location>
        <begin position="1"/>
        <end position="276"/>
    </location>
</feature>
<feature type="active site" description="Proton donor" evidence="1">
    <location>
        <position position="34"/>
    </location>
</feature>
<feature type="binding site" evidence="1">
    <location>
        <begin position="27"/>
        <end position="34"/>
    </location>
    <ligand>
        <name>ATP</name>
        <dbReference type="ChEBI" id="CHEBI:30616"/>
    </ligand>
</feature>
<feature type="binding site" evidence="1">
    <location>
        <position position="58"/>
    </location>
    <ligand>
        <name>(R)-pantoate</name>
        <dbReference type="ChEBI" id="CHEBI:15980"/>
    </ligand>
</feature>
<feature type="binding site" evidence="1">
    <location>
        <position position="58"/>
    </location>
    <ligand>
        <name>beta-alanine</name>
        <dbReference type="ChEBI" id="CHEBI:57966"/>
    </ligand>
</feature>
<feature type="binding site" evidence="1">
    <location>
        <begin position="147"/>
        <end position="150"/>
    </location>
    <ligand>
        <name>ATP</name>
        <dbReference type="ChEBI" id="CHEBI:30616"/>
    </ligand>
</feature>
<feature type="binding site" evidence="1">
    <location>
        <position position="153"/>
    </location>
    <ligand>
        <name>(R)-pantoate</name>
        <dbReference type="ChEBI" id="CHEBI:15980"/>
    </ligand>
</feature>
<feature type="binding site" evidence="1">
    <location>
        <position position="176"/>
    </location>
    <ligand>
        <name>ATP</name>
        <dbReference type="ChEBI" id="CHEBI:30616"/>
    </ligand>
</feature>
<feature type="binding site" evidence="1">
    <location>
        <begin position="184"/>
        <end position="187"/>
    </location>
    <ligand>
        <name>ATP</name>
        <dbReference type="ChEBI" id="CHEBI:30616"/>
    </ligand>
</feature>
<accession>B5Z6E3</accession>
<comment type="function">
    <text evidence="1">Catalyzes the condensation of pantoate with beta-alanine in an ATP-dependent reaction via a pantoyl-adenylate intermediate.</text>
</comment>
<comment type="catalytic activity">
    <reaction evidence="1">
        <text>(R)-pantoate + beta-alanine + ATP = (R)-pantothenate + AMP + diphosphate + H(+)</text>
        <dbReference type="Rhea" id="RHEA:10912"/>
        <dbReference type="ChEBI" id="CHEBI:15378"/>
        <dbReference type="ChEBI" id="CHEBI:15980"/>
        <dbReference type="ChEBI" id="CHEBI:29032"/>
        <dbReference type="ChEBI" id="CHEBI:30616"/>
        <dbReference type="ChEBI" id="CHEBI:33019"/>
        <dbReference type="ChEBI" id="CHEBI:57966"/>
        <dbReference type="ChEBI" id="CHEBI:456215"/>
        <dbReference type="EC" id="6.3.2.1"/>
    </reaction>
</comment>
<comment type="pathway">
    <text evidence="1">Cofactor biosynthesis; (R)-pantothenate biosynthesis; (R)-pantothenate from (R)-pantoate and beta-alanine: step 1/1.</text>
</comment>
<comment type="subunit">
    <text evidence="1">Homodimer.</text>
</comment>
<comment type="subcellular location">
    <subcellularLocation>
        <location evidence="1">Cytoplasm</location>
    </subcellularLocation>
</comment>
<comment type="miscellaneous">
    <text evidence="1">The reaction proceeds by a bi uni uni bi ping pong mechanism.</text>
</comment>
<comment type="similarity">
    <text evidence="1">Belongs to the pantothenate synthetase family.</text>
</comment>
<protein>
    <recommendedName>
        <fullName evidence="1">Pantothenate synthetase</fullName>
        <shortName evidence="1">PS</shortName>
        <ecNumber evidence="1">6.3.2.1</ecNumber>
    </recommendedName>
    <alternativeName>
        <fullName evidence="1">Pantoate--beta-alanine ligase</fullName>
    </alternativeName>
    <alternativeName>
        <fullName evidence="1">Pantoate-activating enzyme</fullName>
    </alternativeName>
</protein>
<organism>
    <name type="scientific">Helicobacter pylori (strain G27)</name>
    <dbReference type="NCBI Taxonomy" id="563041"/>
    <lineage>
        <taxon>Bacteria</taxon>
        <taxon>Pseudomonadati</taxon>
        <taxon>Campylobacterota</taxon>
        <taxon>Epsilonproteobacteria</taxon>
        <taxon>Campylobacterales</taxon>
        <taxon>Helicobacteraceae</taxon>
        <taxon>Helicobacter</taxon>
    </lineage>
</organism>
<proteinExistence type="inferred from homology"/>
<dbReference type="EC" id="6.3.2.1" evidence="1"/>
<dbReference type="EMBL" id="CP001173">
    <property type="protein sequence ID" value="ACI26782.1"/>
    <property type="molecule type" value="Genomic_DNA"/>
</dbReference>
<dbReference type="RefSeq" id="WP_001264318.1">
    <property type="nucleotide sequence ID" value="NC_011333.1"/>
</dbReference>
<dbReference type="SMR" id="B5Z6E3"/>
<dbReference type="KEGG" id="hpg:HPG27_6"/>
<dbReference type="HOGENOM" id="CLU_047148_0_0_7"/>
<dbReference type="UniPathway" id="UPA00028">
    <property type="reaction ID" value="UER00005"/>
</dbReference>
<dbReference type="Proteomes" id="UP000001735">
    <property type="component" value="Chromosome"/>
</dbReference>
<dbReference type="GO" id="GO:0005829">
    <property type="term" value="C:cytosol"/>
    <property type="evidence" value="ECO:0007669"/>
    <property type="project" value="TreeGrafter"/>
</dbReference>
<dbReference type="GO" id="GO:0005524">
    <property type="term" value="F:ATP binding"/>
    <property type="evidence" value="ECO:0007669"/>
    <property type="project" value="UniProtKB-KW"/>
</dbReference>
<dbReference type="GO" id="GO:0004592">
    <property type="term" value="F:pantoate-beta-alanine ligase activity"/>
    <property type="evidence" value="ECO:0007669"/>
    <property type="project" value="UniProtKB-UniRule"/>
</dbReference>
<dbReference type="GO" id="GO:0015940">
    <property type="term" value="P:pantothenate biosynthetic process"/>
    <property type="evidence" value="ECO:0007669"/>
    <property type="project" value="UniProtKB-UniRule"/>
</dbReference>
<dbReference type="CDD" id="cd00560">
    <property type="entry name" value="PanC"/>
    <property type="match status" value="1"/>
</dbReference>
<dbReference type="FunFam" id="3.40.50.620:FF:000114">
    <property type="entry name" value="Pantothenate synthetase"/>
    <property type="match status" value="1"/>
</dbReference>
<dbReference type="Gene3D" id="3.40.50.620">
    <property type="entry name" value="HUPs"/>
    <property type="match status" value="1"/>
</dbReference>
<dbReference type="Gene3D" id="3.30.1300.10">
    <property type="entry name" value="Pantoate-beta-alanine ligase, C-terminal domain"/>
    <property type="match status" value="1"/>
</dbReference>
<dbReference type="HAMAP" id="MF_00158">
    <property type="entry name" value="PanC"/>
    <property type="match status" value="1"/>
</dbReference>
<dbReference type="InterPro" id="IPR004821">
    <property type="entry name" value="Cyt_trans-like"/>
</dbReference>
<dbReference type="InterPro" id="IPR003721">
    <property type="entry name" value="Pantoate_ligase"/>
</dbReference>
<dbReference type="InterPro" id="IPR042176">
    <property type="entry name" value="Pantoate_ligase_C"/>
</dbReference>
<dbReference type="InterPro" id="IPR014729">
    <property type="entry name" value="Rossmann-like_a/b/a_fold"/>
</dbReference>
<dbReference type="NCBIfam" id="TIGR00125">
    <property type="entry name" value="cyt_tran_rel"/>
    <property type="match status" value="1"/>
</dbReference>
<dbReference type="NCBIfam" id="TIGR00018">
    <property type="entry name" value="panC"/>
    <property type="match status" value="1"/>
</dbReference>
<dbReference type="PANTHER" id="PTHR21299">
    <property type="entry name" value="CYTIDYLATE KINASE/PANTOATE-BETA-ALANINE LIGASE"/>
    <property type="match status" value="1"/>
</dbReference>
<dbReference type="PANTHER" id="PTHR21299:SF1">
    <property type="entry name" value="PANTOATE--BETA-ALANINE LIGASE"/>
    <property type="match status" value="1"/>
</dbReference>
<dbReference type="Pfam" id="PF02569">
    <property type="entry name" value="Pantoate_ligase"/>
    <property type="match status" value="1"/>
</dbReference>
<dbReference type="SUPFAM" id="SSF52374">
    <property type="entry name" value="Nucleotidylyl transferase"/>
    <property type="match status" value="1"/>
</dbReference>
<sequence>MRVLETIATLREYRKSLKESVGFVPTMGALHRGHQSLIERSLKENSHTIVSVFVNPTQFGANEDFSAYPRPLEKDLALCEKLGVSAVFAPKIGEMYPYEIEQRLKLYAPTFLSHSLEGAARKGHFDGVVQVVLRLFHLTNPTRAYFGKKDVQQLLIVQHLVQDLLLDIEIVPCEIVRDSDHLALSSRNVYLNATERKQALAIPKALENIKQAIDKGEKACEKLKKLGLEILETLEVDYLEFCNHKLEPLKTIEPTNTLILVAARVGKTRLLDNLWV</sequence>
<evidence type="ECO:0000255" key="1">
    <source>
        <dbReference type="HAMAP-Rule" id="MF_00158"/>
    </source>
</evidence>
<name>PANC_HELPG</name>
<keyword id="KW-0067">ATP-binding</keyword>
<keyword id="KW-0963">Cytoplasm</keyword>
<keyword id="KW-0436">Ligase</keyword>
<keyword id="KW-0547">Nucleotide-binding</keyword>
<keyword id="KW-0566">Pantothenate biosynthesis</keyword>
<keyword id="KW-1185">Reference proteome</keyword>
<gene>
    <name evidence="1" type="primary">panC</name>
    <name type="ordered locus">HPG27_6</name>
</gene>